<accession>Q93QD4</accession>
<accession>Q5TKS3</accession>
<dbReference type="EC" id="2.3.1.39"/>
<dbReference type="EMBL" id="AF275318">
    <property type="protein sequence ID" value="AAK69406.1"/>
    <property type="molecule type" value="Genomic_DNA"/>
</dbReference>
<dbReference type="EMBL" id="AB195288">
    <property type="protein sequence ID" value="BAD72836.1"/>
    <property type="molecule type" value="Genomic_DNA"/>
</dbReference>
<dbReference type="RefSeq" id="WP_000047348.1">
    <property type="nucleotide sequence ID" value="NZ_WWFR01000003.1"/>
</dbReference>
<dbReference type="SMR" id="Q93QD4"/>
<dbReference type="ChEMBL" id="CHEMBL1075258"/>
<dbReference type="OMA" id="AANYNCP"/>
<dbReference type="UniPathway" id="UPA00094"/>
<dbReference type="PRO" id="PR:Q93QD4"/>
<dbReference type="GO" id="GO:0005829">
    <property type="term" value="C:cytosol"/>
    <property type="evidence" value="ECO:0007669"/>
    <property type="project" value="TreeGrafter"/>
</dbReference>
<dbReference type="GO" id="GO:0004314">
    <property type="term" value="F:[acyl-carrier-protein] S-malonyltransferase activity"/>
    <property type="evidence" value="ECO:0007669"/>
    <property type="project" value="UniProtKB-EC"/>
</dbReference>
<dbReference type="GO" id="GO:0006633">
    <property type="term" value="P:fatty acid biosynthetic process"/>
    <property type="evidence" value="ECO:0007669"/>
    <property type="project" value="UniProtKB-UniPathway"/>
</dbReference>
<dbReference type="FunFam" id="3.30.70.250:FF:000001">
    <property type="entry name" value="Malonyl CoA-acyl carrier protein transacylase"/>
    <property type="match status" value="1"/>
</dbReference>
<dbReference type="Gene3D" id="3.30.70.250">
    <property type="entry name" value="Malonyl-CoA ACP transacylase, ACP-binding"/>
    <property type="match status" value="1"/>
</dbReference>
<dbReference type="Gene3D" id="3.40.366.10">
    <property type="entry name" value="Malonyl-Coenzyme A Acyl Carrier Protein, domain 2"/>
    <property type="match status" value="1"/>
</dbReference>
<dbReference type="InterPro" id="IPR001227">
    <property type="entry name" value="Ac_transferase_dom_sf"/>
</dbReference>
<dbReference type="InterPro" id="IPR014043">
    <property type="entry name" value="Acyl_transferase_dom"/>
</dbReference>
<dbReference type="InterPro" id="IPR016035">
    <property type="entry name" value="Acyl_Trfase/lysoPLipase"/>
</dbReference>
<dbReference type="InterPro" id="IPR050858">
    <property type="entry name" value="Mal-CoA-ACP_Trans/PKS_FabD"/>
</dbReference>
<dbReference type="InterPro" id="IPR024925">
    <property type="entry name" value="Malonyl_CoA-ACP_transAc"/>
</dbReference>
<dbReference type="InterPro" id="IPR004410">
    <property type="entry name" value="Malonyl_CoA-ACP_transAc_FabD"/>
</dbReference>
<dbReference type="InterPro" id="IPR016036">
    <property type="entry name" value="Malonyl_transacylase_ACP-bd"/>
</dbReference>
<dbReference type="NCBIfam" id="TIGR00128">
    <property type="entry name" value="fabD"/>
    <property type="match status" value="1"/>
</dbReference>
<dbReference type="PANTHER" id="PTHR42681">
    <property type="entry name" value="MALONYL-COA-ACYL CARRIER PROTEIN TRANSACYLASE, MITOCHONDRIAL"/>
    <property type="match status" value="1"/>
</dbReference>
<dbReference type="PANTHER" id="PTHR42681:SF1">
    <property type="entry name" value="MALONYL-COA-ACYL CARRIER PROTEIN TRANSACYLASE, MITOCHONDRIAL"/>
    <property type="match status" value="1"/>
</dbReference>
<dbReference type="Pfam" id="PF00698">
    <property type="entry name" value="Acyl_transf_1"/>
    <property type="match status" value="1"/>
</dbReference>
<dbReference type="PIRSF" id="PIRSF000446">
    <property type="entry name" value="Mct"/>
    <property type="match status" value="1"/>
</dbReference>
<dbReference type="SMART" id="SM00827">
    <property type="entry name" value="PKS_AT"/>
    <property type="match status" value="1"/>
</dbReference>
<dbReference type="SUPFAM" id="SSF52151">
    <property type="entry name" value="FabD/lysophospholipase-like"/>
    <property type="match status" value="1"/>
</dbReference>
<dbReference type="SUPFAM" id="SSF55048">
    <property type="entry name" value="Probable ACP-binding domain of malonyl-CoA ACP transacylase"/>
    <property type="match status" value="1"/>
</dbReference>
<gene>
    <name type="primary">fabD</name>
</gene>
<sequence>MSKTAIIFPGQGAQKVGMAQDLFNNNDQATEILTSAANTLDFDILETMFTDEEGKLGETENTQPALLTHSSALLAALKNLNPDFTMGHSLGEYSSLVAADVLSFEDAVKIVRKRGQLMAQAFPTGVGSMAAVLGLDFDKVDEICKSLSSDDKIIEPANINCPGQIVVSGHKALIDELVEKGKSLGAKRVMPLAVSGPFHSSLMKVIEEDFSSYINQFEWRDAKFPVVQNVNAQGETDKEVIKSNMVKQLYSPVQFINSTEWLIDQGVDHFIEIGPGKVLSGLIKKINRDVKLTSIQTLEDVKGWNEND</sequence>
<comment type="catalytic activity">
    <reaction>
        <text>holo-[ACP] + malonyl-CoA = malonyl-[ACP] + CoA</text>
        <dbReference type="Rhea" id="RHEA:41792"/>
        <dbReference type="Rhea" id="RHEA-COMP:9623"/>
        <dbReference type="Rhea" id="RHEA-COMP:9685"/>
        <dbReference type="ChEBI" id="CHEBI:57287"/>
        <dbReference type="ChEBI" id="CHEBI:57384"/>
        <dbReference type="ChEBI" id="CHEBI:64479"/>
        <dbReference type="ChEBI" id="CHEBI:78449"/>
        <dbReference type="EC" id="2.3.1.39"/>
    </reaction>
</comment>
<comment type="pathway">
    <text>Lipid metabolism; fatty acid biosynthesis.</text>
</comment>
<comment type="similarity">
    <text evidence="2">Belongs to the FabD family.</text>
</comment>
<keyword id="KW-0012">Acyltransferase</keyword>
<keyword id="KW-0275">Fatty acid biosynthesis</keyword>
<keyword id="KW-0276">Fatty acid metabolism</keyword>
<keyword id="KW-0444">Lipid biosynthesis</keyword>
<keyword id="KW-0443">Lipid metabolism</keyword>
<keyword id="KW-0808">Transferase</keyword>
<name>FABD_STAAU</name>
<proteinExistence type="inferred from homology"/>
<protein>
    <recommendedName>
        <fullName>Malonyl CoA-acyl carrier protein transacylase</fullName>
        <shortName>MCT</shortName>
        <ecNumber>2.3.1.39</ecNumber>
    </recommendedName>
</protein>
<evidence type="ECO:0000250" key="1"/>
<evidence type="ECO:0000305" key="2"/>
<reference key="1">
    <citation type="submission" date="2000-06" db="EMBL/GenBank/DDBJ databases">
        <title>Cloning and characterization of S.aureus malonyl-CoA:ACP S-malonyl transferase.</title>
        <authorList>
            <person name="Lin A.H."/>
            <person name="Choi G.H."/>
            <person name="McCroskey M."/>
            <person name="Harris D.W."/>
            <person name="Murray R.W."/>
            <person name="Rockenbach S.K."/>
            <person name="Curry K.A."/>
            <person name="Marotti K.R."/>
        </authorList>
    </citation>
    <scope>NUCLEOTIDE SEQUENCE [GENOMIC DNA]</scope>
</reference>
<reference key="2">
    <citation type="submission" date="2004-11" db="EMBL/GenBank/DDBJ databases">
        <title>Cloning and expression of Staphylococcus aureus Smith fab genes.</title>
        <authorList>
            <person name="Morita Y."/>
            <person name="Ikeno S."/>
            <person name="Tsuchiya K.S."/>
        </authorList>
    </citation>
    <scope>NUCLEOTIDE SEQUENCE [GENOMIC DNA] OF 6-303</scope>
    <source>
        <strain>Smith</strain>
    </source>
</reference>
<feature type="chain" id="PRO_0000194220" description="Malonyl CoA-acyl carrier protein transacylase">
    <location>
        <begin position="1"/>
        <end position="308"/>
    </location>
</feature>
<feature type="active site" evidence="1">
    <location>
        <position position="89"/>
    </location>
</feature>
<feature type="active site" evidence="1">
    <location>
        <position position="199"/>
    </location>
</feature>
<feature type="sequence conflict" description="In Ref. 2; BAD72836." evidence="2" ref="2">
    <original>F</original>
    <variation>Y</variation>
    <location>
        <position position="23"/>
    </location>
</feature>
<feature type="sequence conflict" description="In Ref. 2; BAD72836." evidence="2" ref="2">
    <original>E</original>
    <variation>D</variation>
    <location>
        <position position="53"/>
    </location>
</feature>
<feature type="sequence conflict" description="In Ref. 2; BAD72836." evidence="2" ref="2">
    <original>R</original>
    <variation>H</variation>
    <location>
        <position position="220"/>
    </location>
</feature>
<organism>
    <name type="scientific">Staphylococcus aureus</name>
    <dbReference type="NCBI Taxonomy" id="1280"/>
    <lineage>
        <taxon>Bacteria</taxon>
        <taxon>Bacillati</taxon>
        <taxon>Bacillota</taxon>
        <taxon>Bacilli</taxon>
        <taxon>Bacillales</taxon>
        <taxon>Staphylococcaceae</taxon>
        <taxon>Staphylococcus</taxon>
    </lineage>
</organism>